<evidence type="ECO:0000250" key="1"/>
<evidence type="ECO:0000250" key="2">
    <source>
        <dbReference type="UniProtKB" id="O00161"/>
    </source>
</evidence>
<evidence type="ECO:0000250" key="3">
    <source>
        <dbReference type="UniProtKB" id="O70377"/>
    </source>
</evidence>
<evidence type="ECO:0000255" key="4">
    <source>
        <dbReference type="PROSITE-ProRule" id="PRU00202"/>
    </source>
</evidence>
<evidence type="ECO:0000256" key="5">
    <source>
        <dbReference type="SAM" id="MobiDB-lite"/>
    </source>
</evidence>
<evidence type="ECO:0000269" key="6">
    <source>
    </source>
</evidence>
<evidence type="ECO:0000269" key="7">
    <source>
    </source>
</evidence>
<evidence type="ECO:0000269" key="8">
    <source>
    </source>
</evidence>
<evidence type="ECO:0000269" key="9">
    <source>
    </source>
</evidence>
<evidence type="ECO:0000305" key="10"/>
<evidence type="ECO:0007744" key="11">
    <source>
    </source>
</evidence>
<evidence type="ECO:0007744" key="12">
    <source>
    </source>
</evidence>
<evidence type="ECO:0007744" key="13">
    <source>
    </source>
</evidence>
<organism>
    <name type="scientific">Mus musculus</name>
    <name type="common">Mouse</name>
    <dbReference type="NCBI Taxonomy" id="10090"/>
    <lineage>
        <taxon>Eukaryota</taxon>
        <taxon>Metazoa</taxon>
        <taxon>Chordata</taxon>
        <taxon>Craniata</taxon>
        <taxon>Vertebrata</taxon>
        <taxon>Euteleostomi</taxon>
        <taxon>Mammalia</taxon>
        <taxon>Eutheria</taxon>
        <taxon>Euarchontoglires</taxon>
        <taxon>Glires</taxon>
        <taxon>Rodentia</taxon>
        <taxon>Myomorpha</taxon>
        <taxon>Muroidea</taxon>
        <taxon>Muridae</taxon>
        <taxon>Murinae</taxon>
        <taxon>Mus</taxon>
        <taxon>Mus</taxon>
    </lineage>
</organism>
<sequence length="210" mass="23261">MDNLSPEEVQLRAHQVTDESLESTRRILGLAIESQDAGIKTITMLDEQGEQLNRIEEGMDQINKDMREAEKTLTELNKCCGLCICPCNRTKNFESGKNYKATWGDGGDNSPSNVVSKQPSRITNGQPQQTTGAASGGYIKRITNDAREDEMEENLTQVGSILGNLKNMALDMGNEIDAQNQQIQKITEKADTNKNRIDIANTRAKKLIDS</sequence>
<comment type="function">
    <text evidence="1">Essential component of the high affinity receptor for the general membrane fusion machinery and an important regulator of transport vesicle docking and fusion.</text>
</comment>
<comment type="subunit">
    <text evidence="2 3 6 7 8">Homotetramer (via coiled-coil domain), also forms heterotetramers with STX4 and VAMP3 (By similarity). Found in a complex with VAMP8 and STX1A (By similarity). Found in a complex with VAMP8 and STX4 in pancreas (PubMed:15363411). Interacts simultaneously with SNAPIN and SYN4 (By similarity). Interacts with STX1A (PubMed:9507000). Interacts with STX12 (PubMed:9507000). Interacts tightly to multiple syntaxins and synaptobrevins/VAMPs (By similarity). Interacts with ZDHHC13 (via ANK repeats) (PubMed:26198635). Interacts with ZDHHC17 (via ANK repeats) (PubMed:26198635).</text>
</comment>
<comment type="interaction">
    <interactant intactId="EBI-1812522">
        <id>O09044</id>
    </interactant>
    <interactant intactId="EBI-918243">
        <id>Q08850</id>
        <label>Stx4</label>
    </interactant>
    <organismsDiffer>true</organismsDiffer>
    <experiments>4</experiments>
</comment>
<comment type="subcellular location">
    <subcellularLocation>
        <location>Cell membrane</location>
        <topology>Peripheral membrane protein</topology>
    </subcellularLocation>
    <subcellularLocation>
        <location evidence="1">Cell membrane</location>
        <topology evidence="1">Lipid-anchor</topology>
    </subcellularLocation>
    <subcellularLocation>
        <location>Synapse</location>
        <location>Synaptosome</location>
    </subcellularLocation>
    <text>Mainly localized to the plasma membrane.</text>
</comment>
<comment type="tissue specificity">
    <text>Expressed in non-neuronal tissues.</text>
</comment>
<comment type="PTM">
    <text evidence="9">(Microbial infection) Targeted and hydrolyzed by C.botulinum neurotoxin type A (BoNT/A, botA) which hydrolyzes the 202-Thr-|-Arg-203 bond; the in vitro reaction is not highly efficient (PubMed:9886085).</text>
</comment>
<comment type="PTM">
    <text evidence="9">(Microbial infection) Targeted and hydrolyzed by C.botulinum neurotoxin type E (BoNT/E) which hydrolyzes the 185-Arg-|-Ile-186 bond; the in vitro reaction is more efficient than that of BoNT/A (PubMed:9886085).</text>
</comment>
<comment type="similarity">
    <text evidence="10">Belongs to the SNAP-25 family.</text>
</comment>
<keyword id="KW-0007">Acetylation</keyword>
<keyword id="KW-1003">Cell membrane</keyword>
<keyword id="KW-0175">Coiled coil</keyword>
<keyword id="KW-0449">Lipoprotein</keyword>
<keyword id="KW-0472">Membrane</keyword>
<keyword id="KW-0564">Palmitate</keyword>
<keyword id="KW-0597">Phosphoprotein</keyword>
<keyword id="KW-0653">Protein transport</keyword>
<keyword id="KW-1185">Reference proteome</keyword>
<keyword id="KW-0677">Repeat</keyword>
<keyword id="KW-0770">Synapse</keyword>
<keyword id="KW-0771">Synaptosome</keyword>
<keyword id="KW-0813">Transport</keyword>
<protein>
    <recommendedName>
        <fullName>Synaptosomal-associated protein 23</fullName>
        <shortName>SNAP-23</shortName>
    </recommendedName>
    <alternativeName>
        <fullName>Syndet</fullName>
    </alternativeName>
    <alternativeName>
        <fullName>Vesicle-membrane fusion protein SNAP-23</fullName>
    </alternativeName>
</protein>
<name>SNP23_MOUSE</name>
<proteinExistence type="evidence at protein level"/>
<accession>O09044</accession>
<accession>O35620</accession>
<feature type="chain" id="PRO_0000213599" description="Synaptosomal-associated protein 23">
    <location>
        <begin position="1"/>
        <end position="210"/>
    </location>
</feature>
<feature type="domain" description="t-SNARE coiled-coil homology 1" evidence="4">
    <location>
        <begin position="14"/>
        <end position="76"/>
    </location>
</feature>
<feature type="domain" description="t-SNARE coiled-coil homology 2" evidence="4">
    <location>
        <begin position="145"/>
        <end position="207"/>
    </location>
</feature>
<feature type="region of interest" description="Disordered" evidence="5">
    <location>
        <begin position="104"/>
        <end position="135"/>
    </location>
</feature>
<feature type="coiled-coil region" evidence="1">
    <location>
        <begin position="23"/>
        <end position="76"/>
    </location>
</feature>
<feature type="compositionally biased region" description="Polar residues" evidence="5">
    <location>
        <begin position="109"/>
        <end position="133"/>
    </location>
</feature>
<feature type="site" description="(Microbial infection) Cleavage; by C.botulinum neurotoxin type E (BoNT/E)" evidence="9">
    <location>
        <begin position="185"/>
        <end position="186"/>
    </location>
</feature>
<feature type="site" description="(Microbial infection) Cleavage; by C.botulinum neurotoxin type A (BoNT/A, botA)" evidence="9">
    <location>
        <begin position="202"/>
        <end position="203"/>
    </location>
</feature>
<feature type="modified residue" description="N-acetylmethionine" evidence="2">
    <location>
        <position position="1"/>
    </location>
</feature>
<feature type="modified residue" description="Phosphoserine" evidence="2">
    <location>
        <position position="5"/>
    </location>
</feature>
<feature type="modified residue" description="Phosphoserine" evidence="12">
    <location>
        <position position="20"/>
    </location>
</feature>
<feature type="modified residue" description="Phosphoserine" evidence="12">
    <location>
        <position position="23"/>
    </location>
</feature>
<feature type="modified residue" description="Phosphoserine" evidence="12">
    <location>
        <position position="34"/>
    </location>
</feature>
<feature type="modified residue" description="Phosphoserine" evidence="11 12 13">
    <location>
        <position position="110"/>
    </location>
</feature>
<feature type="modified residue" description="Phosphoserine" evidence="13">
    <location>
        <position position="160"/>
    </location>
</feature>
<feature type="lipid moiety-binding region" description="S-palmitoyl cysteine" evidence="1">
    <location>
        <position position="79"/>
    </location>
</feature>
<feature type="lipid moiety-binding region" description="S-palmitoyl cysteine" evidence="1">
    <location>
        <position position="80"/>
    </location>
</feature>
<feature type="lipid moiety-binding region" description="S-palmitoyl cysteine" evidence="1">
    <location>
        <position position="83"/>
    </location>
</feature>
<feature type="lipid moiety-binding region" description="S-palmitoyl cysteine" evidence="1">
    <location>
        <position position="85"/>
    </location>
</feature>
<feature type="lipid moiety-binding region" description="S-palmitoyl cysteine" evidence="1">
    <location>
        <position position="87"/>
    </location>
</feature>
<feature type="mutagenesis site" description="Inhibits interaction with ZDHHC13 and ZDHHC17.">
    <original>P</original>
    <variation>A</variation>
    <location>
        <position position="119"/>
    </location>
</feature>
<feature type="sequence conflict" description="In Ref. 3; AAB62932." evidence="10" ref="3">
    <original>P</original>
    <variation>S</variation>
    <location>
        <position position="6"/>
    </location>
</feature>
<feature type="sequence conflict" description="In Ref. 3; AAB62932." evidence="10" ref="3">
    <original>A</original>
    <variation>P</variation>
    <location>
        <position position="204"/>
    </location>
</feature>
<dbReference type="EMBL" id="AB000822">
    <property type="protein sequence ID" value="BAA20345.1"/>
    <property type="molecule type" value="mRNA"/>
</dbReference>
<dbReference type="EMBL" id="U73143">
    <property type="protein sequence ID" value="AAB53597.1"/>
    <property type="molecule type" value="mRNA"/>
</dbReference>
<dbReference type="EMBL" id="AF007169">
    <property type="protein sequence ID" value="AAB62932.1"/>
    <property type="molecule type" value="mRNA"/>
</dbReference>
<dbReference type="EMBL" id="AF213257">
    <property type="protein sequence ID" value="AAF23503.1"/>
    <property type="molecule type" value="Genomic_DNA"/>
</dbReference>
<dbReference type="EMBL" id="AF213251">
    <property type="protein sequence ID" value="AAF23503.1"/>
    <property type="status" value="JOINED"/>
    <property type="molecule type" value="Genomic_DNA"/>
</dbReference>
<dbReference type="EMBL" id="AF213252">
    <property type="protein sequence ID" value="AAF23503.1"/>
    <property type="status" value="JOINED"/>
    <property type="molecule type" value="Genomic_DNA"/>
</dbReference>
<dbReference type="EMBL" id="AF213253">
    <property type="protein sequence ID" value="AAF23503.1"/>
    <property type="status" value="JOINED"/>
    <property type="molecule type" value="Genomic_DNA"/>
</dbReference>
<dbReference type="EMBL" id="AF213254">
    <property type="protein sequence ID" value="AAF23503.1"/>
    <property type="status" value="JOINED"/>
    <property type="molecule type" value="Genomic_DNA"/>
</dbReference>
<dbReference type="EMBL" id="AF213255">
    <property type="protein sequence ID" value="AAF23503.1"/>
    <property type="status" value="JOINED"/>
    <property type="molecule type" value="Genomic_DNA"/>
</dbReference>
<dbReference type="EMBL" id="AF213256">
    <property type="protein sequence ID" value="AAF23503.1"/>
    <property type="status" value="JOINED"/>
    <property type="molecule type" value="Genomic_DNA"/>
</dbReference>
<dbReference type="EMBL" id="AK019162">
    <property type="protein sequence ID" value="BAB31577.1"/>
    <property type="molecule type" value="mRNA"/>
</dbReference>
<dbReference type="EMBL" id="BC070456">
    <property type="protein sequence ID" value="AAH70456.1"/>
    <property type="molecule type" value="mRNA"/>
</dbReference>
<dbReference type="CCDS" id="CCDS16622.1"/>
<dbReference type="PIR" id="JC5512">
    <property type="entry name" value="JC5512"/>
</dbReference>
<dbReference type="RefSeq" id="NP_001171263.1">
    <property type="nucleotide sequence ID" value="NM_001177792.1"/>
</dbReference>
<dbReference type="RefSeq" id="NP_001171264.1">
    <property type="nucleotide sequence ID" value="NM_001177793.2"/>
</dbReference>
<dbReference type="RefSeq" id="NP_001399555.1">
    <property type="nucleotide sequence ID" value="NM_001412626.1"/>
</dbReference>
<dbReference type="RefSeq" id="NP_001399556.1">
    <property type="nucleotide sequence ID" value="NM_001412627.1"/>
</dbReference>
<dbReference type="RefSeq" id="NP_033248.1">
    <property type="nucleotide sequence ID" value="NM_009222.4"/>
</dbReference>
<dbReference type="RefSeq" id="XP_006499120.1">
    <property type="nucleotide sequence ID" value="XM_006499057.3"/>
</dbReference>
<dbReference type="SMR" id="O09044"/>
<dbReference type="BioGRID" id="203367">
    <property type="interactions" value="15"/>
</dbReference>
<dbReference type="CORUM" id="O09044"/>
<dbReference type="DIP" id="DIP-41401N"/>
<dbReference type="FunCoup" id="O09044">
    <property type="interactions" value="1752"/>
</dbReference>
<dbReference type="IntAct" id="O09044">
    <property type="interactions" value="10"/>
</dbReference>
<dbReference type="MINT" id="O09044"/>
<dbReference type="STRING" id="10090.ENSMUSP00000112138"/>
<dbReference type="GlyGen" id="O09044">
    <property type="glycosylation" value="1 site, 1 N-linked glycan (1 site)"/>
</dbReference>
<dbReference type="iPTMnet" id="O09044"/>
<dbReference type="PhosphoSitePlus" id="O09044"/>
<dbReference type="SwissPalm" id="O09044"/>
<dbReference type="jPOST" id="O09044"/>
<dbReference type="PaxDb" id="10090-ENSMUSP00000112138"/>
<dbReference type="ProteomicsDB" id="261530"/>
<dbReference type="Pumba" id="O09044"/>
<dbReference type="Antibodypedia" id="712">
    <property type="antibodies" value="427 antibodies from 35 providers"/>
</dbReference>
<dbReference type="DNASU" id="20619"/>
<dbReference type="Ensembl" id="ENSMUST00000028743.10">
    <property type="protein sequence ID" value="ENSMUSP00000028743.4"/>
    <property type="gene ID" value="ENSMUSG00000027287.15"/>
</dbReference>
<dbReference type="Ensembl" id="ENSMUST00000110711.9">
    <property type="protein sequence ID" value="ENSMUSP00000106339.3"/>
    <property type="gene ID" value="ENSMUSG00000027287.15"/>
</dbReference>
<dbReference type="GeneID" id="20619"/>
<dbReference type="KEGG" id="mmu:20619"/>
<dbReference type="UCSC" id="uc008lwg.1">
    <property type="organism name" value="mouse"/>
</dbReference>
<dbReference type="AGR" id="MGI:109356"/>
<dbReference type="CTD" id="8773"/>
<dbReference type="MGI" id="MGI:109356">
    <property type="gene designation" value="Snap23"/>
</dbReference>
<dbReference type="VEuPathDB" id="HostDB:ENSMUSG00000027287"/>
<dbReference type="eggNOG" id="KOG3065">
    <property type="taxonomic scope" value="Eukaryota"/>
</dbReference>
<dbReference type="GeneTree" id="ENSGT00950000182843"/>
<dbReference type="HOGENOM" id="CLU_096939_0_0_1"/>
<dbReference type="InParanoid" id="O09044"/>
<dbReference type="OMA" id="ADMTNPF"/>
<dbReference type="OrthoDB" id="19261at2759"/>
<dbReference type="PhylomeDB" id="O09044"/>
<dbReference type="Reactome" id="R-MMU-1236974">
    <property type="pathway name" value="ER-Phagosome pathway"/>
</dbReference>
<dbReference type="Reactome" id="R-MMU-199992">
    <property type="pathway name" value="trans-Golgi Network Vesicle Budding"/>
</dbReference>
<dbReference type="Reactome" id="R-MMU-6798695">
    <property type="pathway name" value="Neutrophil degranulation"/>
</dbReference>
<dbReference type="Reactome" id="R-MMU-8980692">
    <property type="pathway name" value="RHOA GTPase cycle"/>
</dbReference>
<dbReference type="Reactome" id="R-MMU-9013026">
    <property type="pathway name" value="RHOB GTPase cycle"/>
</dbReference>
<dbReference type="Reactome" id="R-MMU-9013149">
    <property type="pathway name" value="RAC1 GTPase cycle"/>
</dbReference>
<dbReference type="Reactome" id="R-MMU-9013406">
    <property type="pathway name" value="RHOQ GTPase cycle"/>
</dbReference>
<dbReference type="Reactome" id="R-MMU-9013423">
    <property type="pathway name" value="RAC3 GTPase cycle"/>
</dbReference>
<dbReference type="Reactome" id="R-MMU-9035034">
    <property type="pathway name" value="RHOF GTPase cycle"/>
</dbReference>
<dbReference type="BioGRID-ORCS" id="20619">
    <property type="hits" value="22 hits in 79 CRISPR screens"/>
</dbReference>
<dbReference type="CD-CODE" id="CE726F99">
    <property type="entry name" value="Postsynaptic density"/>
</dbReference>
<dbReference type="ChiTaRS" id="Snap23">
    <property type="organism name" value="mouse"/>
</dbReference>
<dbReference type="PRO" id="PR:O09044"/>
<dbReference type="Proteomes" id="UP000000589">
    <property type="component" value="Chromosome 2"/>
</dbReference>
<dbReference type="RNAct" id="O09044">
    <property type="molecule type" value="protein"/>
</dbReference>
<dbReference type="Bgee" id="ENSMUSG00000027287">
    <property type="expression patterns" value="Expressed in ascending aorta and 261 other cell types or tissues"/>
</dbReference>
<dbReference type="ExpressionAtlas" id="O09044">
    <property type="expression patterns" value="baseline and differential"/>
</dbReference>
<dbReference type="GO" id="GO:0005912">
    <property type="term" value="C:adherens junction"/>
    <property type="evidence" value="ECO:0007669"/>
    <property type="project" value="Ensembl"/>
</dbReference>
<dbReference type="GO" id="GO:0042582">
    <property type="term" value="C:azurophil granule"/>
    <property type="evidence" value="ECO:0007669"/>
    <property type="project" value="Ensembl"/>
</dbReference>
<dbReference type="GO" id="GO:0005929">
    <property type="term" value="C:cilium"/>
    <property type="evidence" value="ECO:0007669"/>
    <property type="project" value="Ensembl"/>
</dbReference>
<dbReference type="GO" id="GO:0031410">
    <property type="term" value="C:cytoplasmic vesicle"/>
    <property type="evidence" value="ECO:0000314"/>
    <property type="project" value="MGI"/>
</dbReference>
<dbReference type="GO" id="GO:0005739">
    <property type="term" value="C:mitochondrion"/>
    <property type="evidence" value="ECO:0007669"/>
    <property type="project" value="Ensembl"/>
</dbReference>
<dbReference type="GO" id="GO:0043005">
    <property type="term" value="C:neuron projection"/>
    <property type="evidence" value="ECO:0007669"/>
    <property type="project" value="UniProtKB-KW"/>
</dbReference>
<dbReference type="GO" id="GO:0005654">
    <property type="term" value="C:nucleoplasm"/>
    <property type="evidence" value="ECO:0007669"/>
    <property type="project" value="Ensembl"/>
</dbReference>
<dbReference type="GO" id="GO:0005886">
    <property type="term" value="C:plasma membrane"/>
    <property type="evidence" value="ECO:0000314"/>
    <property type="project" value="MGI"/>
</dbReference>
<dbReference type="GO" id="GO:0031201">
    <property type="term" value="C:SNARE complex"/>
    <property type="evidence" value="ECO:0000314"/>
    <property type="project" value="MGI"/>
</dbReference>
<dbReference type="GO" id="GO:0042581">
    <property type="term" value="C:specific granule"/>
    <property type="evidence" value="ECO:0007669"/>
    <property type="project" value="Ensembl"/>
</dbReference>
<dbReference type="GO" id="GO:0045202">
    <property type="term" value="C:synapse"/>
    <property type="evidence" value="ECO:0007669"/>
    <property type="project" value="UniProtKB-SubCell"/>
</dbReference>
<dbReference type="GO" id="GO:0019905">
    <property type="term" value="F:syntaxin binding"/>
    <property type="evidence" value="ECO:0007669"/>
    <property type="project" value="Ensembl"/>
</dbReference>
<dbReference type="GO" id="GO:0006887">
    <property type="term" value="P:exocytosis"/>
    <property type="evidence" value="ECO:0000315"/>
    <property type="project" value="MGI"/>
</dbReference>
<dbReference type="GO" id="GO:0002553">
    <property type="term" value="P:histamine secretion by mast cell"/>
    <property type="evidence" value="ECO:0007669"/>
    <property type="project" value="Ensembl"/>
</dbReference>
<dbReference type="GO" id="GO:0015031">
    <property type="term" value="P:protein transport"/>
    <property type="evidence" value="ECO:0007669"/>
    <property type="project" value="UniProtKB-KW"/>
</dbReference>
<dbReference type="CDD" id="cd15884">
    <property type="entry name" value="SNARE_SNAP23C"/>
    <property type="match status" value="1"/>
</dbReference>
<dbReference type="CDD" id="cd15895">
    <property type="entry name" value="SNARE_SNAP23N"/>
    <property type="match status" value="1"/>
</dbReference>
<dbReference type="FunFam" id="1.20.5.110:FF:000007">
    <property type="entry name" value="Synaptosomal-associated protein"/>
    <property type="match status" value="1"/>
</dbReference>
<dbReference type="FunFam" id="1.20.5.110:FF:000018">
    <property type="entry name" value="Synaptosomal-associated protein"/>
    <property type="match status" value="1"/>
</dbReference>
<dbReference type="Gene3D" id="1.20.5.110">
    <property type="match status" value="2"/>
</dbReference>
<dbReference type="InterPro" id="IPR000928">
    <property type="entry name" value="SNAP-25_dom"/>
</dbReference>
<dbReference type="InterPro" id="IPR000727">
    <property type="entry name" value="T_SNARE_dom"/>
</dbReference>
<dbReference type="PANTHER" id="PTHR19305">
    <property type="entry name" value="SYNAPTOSOMAL ASSOCIATED PROTEIN"/>
    <property type="match status" value="1"/>
</dbReference>
<dbReference type="PANTHER" id="PTHR19305:SF4">
    <property type="entry name" value="SYNAPTOSOMAL-ASSOCIATED PROTEIN 23"/>
    <property type="match status" value="1"/>
</dbReference>
<dbReference type="Pfam" id="PF00835">
    <property type="entry name" value="SNAP-25"/>
    <property type="match status" value="1"/>
</dbReference>
<dbReference type="SMART" id="SM00397">
    <property type="entry name" value="t_SNARE"/>
    <property type="match status" value="2"/>
</dbReference>
<dbReference type="SUPFAM" id="SSF58038">
    <property type="entry name" value="SNARE fusion complex"/>
    <property type="match status" value="2"/>
</dbReference>
<dbReference type="PROSITE" id="PS50192">
    <property type="entry name" value="T_SNARE"/>
    <property type="match status" value="2"/>
</dbReference>
<reference key="1">
    <citation type="journal article" date="1997" name="Biochem. Biophys. Res. Commun.">
        <title>Inhibition of the binding of SNAP-23 to syntaxin 4 by Munc18c.</title>
        <authorList>
            <person name="Araki S."/>
            <person name="Tamori Y."/>
            <person name="Kawanishi M."/>
            <person name="Shinoda H."/>
            <person name="Masugi J."/>
            <person name="Mori H."/>
            <person name="Niki T."/>
            <person name="Okazawa H."/>
            <person name="Kubota T."/>
            <person name="Kasuga M."/>
        </authorList>
    </citation>
    <scope>NUCLEOTIDE SEQUENCE [MRNA]</scope>
    <source>
        <tissue>Adipose tissue</tissue>
    </source>
</reference>
<reference key="2">
    <citation type="journal article" date="1997" name="J. Cell Sci.">
        <title>Syndet is a novel SNAP-25 related protein expressed in many tissues.</title>
        <authorList>
            <person name="Wang G."/>
            <person name="Witkin J.W."/>
            <person name="Hao G."/>
            <person name="Bankaitis V.A."/>
            <person name="Scherer P.E."/>
            <person name="Baldini G."/>
        </authorList>
    </citation>
    <scope>NUCLEOTIDE SEQUENCE [MRNA]</scope>
</reference>
<reference key="3">
    <citation type="submission" date="1997-06" db="EMBL/GenBank/DDBJ databases">
        <title>SNARE expression in mouse plasma cells.</title>
        <authorList>
            <person name="Olken S.K."/>
            <person name="Doerre S."/>
            <person name="Corley R.B."/>
        </authorList>
    </citation>
    <scope>NUCLEOTIDE SEQUENCE [MRNA]</scope>
</reference>
<reference key="4">
    <citation type="journal article" date="2000" name="Gene">
        <title>Structure and chromosomal localization of the mouse SNAP-23 gene.</title>
        <authorList>
            <person name="Vaidyanathan V.V."/>
            <person name="Roche P.A."/>
        </authorList>
    </citation>
    <scope>NUCLEOTIDE SEQUENCE [GENOMIC DNA]</scope>
    <source>
        <strain>129/SvJ</strain>
    </source>
</reference>
<reference key="5">
    <citation type="journal article" date="2005" name="Science">
        <title>The transcriptional landscape of the mammalian genome.</title>
        <authorList>
            <person name="Carninci P."/>
            <person name="Kasukawa T."/>
            <person name="Katayama S."/>
            <person name="Gough J."/>
            <person name="Frith M.C."/>
            <person name="Maeda N."/>
            <person name="Oyama R."/>
            <person name="Ravasi T."/>
            <person name="Lenhard B."/>
            <person name="Wells C."/>
            <person name="Kodzius R."/>
            <person name="Shimokawa K."/>
            <person name="Bajic V.B."/>
            <person name="Brenner S.E."/>
            <person name="Batalov S."/>
            <person name="Forrest A.R."/>
            <person name="Zavolan M."/>
            <person name="Davis M.J."/>
            <person name="Wilming L.G."/>
            <person name="Aidinis V."/>
            <person name="Allen J.E."/>
            <person name="Ambesi-Impiombato A."/>
            <person name="Apweiler R."/>
            <person name="Aturaliya R.N."/>
            <person name="Bailey T.L."/>
            <person name="Bansal M."/>
            <person name="Baxter L."/>
            <person name="Beisel K.W."/>
            <person name="Bersano T."/>
            <person name="Bono H."/>
            <person name="Chalk A.M."/>
            <person name="Chiu K.P."/>
            <person name="Choudhary V."/>
            <person name="Christoffels A."/>
            <person name="Clutterbuck D.R."/>
            <person name="Crowe M.L."/>
            <person name="Dalla E."/>
            <person name="Dalrymple B.P."/>
            <person name="de Bono B."/>
            <person name="Della Gatta G."/>
            <person name="di Bernardo D."/>
            <person name="Down T."/>
            <person name="Engstrom P."/>
            <person name="Fagiolini M."/>
            <person name="Faulkner G."/>
            <person name="Fletcher C.F."/>
            <person name="Fukushima T."/>
            <person name="Furuno M."/>
            <person name="Futaki S."/>
            <person name="Gariboldi M."/>
            <person name="Georgii-Hemming P."/>
            <person name="Gingeras T.R."/>
            <person name="Gojobori T."/>
            <person name="Green R.E."/>
            <person name="Gustincich S."/>
            <person name="Harbers M."/>
            <person name="Hayashi Y."/>
            <person name="Hensch T.K."/>
            <person name="Hirokawa N."/>
            <person name="Hill D."/>
            <person name="Huminiecki L."/>
            <person name="Iacono M."/>
            <person name="Ikeo K."/>
            <person name="Iwama A."/>
            <person name="Ishikawa T."/>
            <person name="Jakt M."/>
            <person name="Kanapin A."/>
            <person name="Katoh M."/>
            <person name="Kawasawa Y."/>
            <person name="Kelso J."/>
            <person name="Kitamura H."/>
            <person name="Kitano H."/>
            <person name="Kollias G."/>
            <person name="Krishnan S.P."/>
            <person name="Kruger A."/>
            <person name="Kummerfeld S.K."/>
            <person name="Kurochkin I.V."/>
            <person name="Lareau L.F."/>
            <person name="Lazarevic D."/>
            <person name="Lipovich L."/>
            <person name="Liu J."/>
            <person name="Liuni S."/>
            <person name="McWilliam S."/>
            <person name="Madan Babu M."/>
            <person name="Madera M."/>
            <person name="Marchionni L."/>
            <person name="Matsuda H."/>
            <person name="Matsuzawa S."/>
            <person name="Miki H."/>
            <person name="Mignone F."/>
            <person name="Miyake S."/>
            <person name="Morris K."/>
            <person name="Mottagui-Tabar S."/>
            <person name="Mulder N."/>
            <person name="Nakano N."/>
            <person name="Nakauchi H."/>
            <person name="Ng P."/>
            <person name="Nilsson R."/>
            <person name="Nishiguchi S."/>
            <person name="Nishikawa S."/>
            <person name="Nori F."/>
            <person name="Ohara O."/>
            <person name="Okazaki Y."/>
            <person name="Orlando V."/>
            <person name="Pang K.C."/>
            <person name="Pavan W.J."/>
            <person name="Pavesi G."/>
            <person name="Pesole G."/>
            <person name="Petrovsky N."/>
            <person name="Piazza S."/>
            <person name="Reed J."/>
            <person name="Reid J.F."/>
            <person name="Ring B.Z."/>
            <person name="Ringwald M."/>
            <person name="Rost B."/>
            <person name="Ruan Y."/>
            <person name="Salzberg S.L."/>
            <person name="Sandelin A."/>
            <person name="Schneider C."/>
            <person name="Schoenbach C."/>
            <person name="Sekiguchi K."/>
            <person name="Semple C.A."/>
            <person name="Seno S."/>
            <person name="Sessa L."/>
            <person name="Sheng Y."/>
            <person name="Shibata Y."/>
            <person name="Shimada H."/>
            <person name="Shimada K."/>
            <person name="Silva D."/>
            <person name="Sinclair B."/>
            <person name="Sperling S."/>
            <person name="Stupka E."/>
            <person name="Sugiura K."/>
            <person name="Sultana R."/>
            <person name="Takenaka Y."/>
            <person name="Taki K."/>
            <person name="Tammoja K."/>
            <person name="Tan S.L."/>
            <person name="Tang S."/>
            <person name="Taylor M.S."/>
            <person name="Tegner J."/>
            <person name="Teichmann S.A."/>
            <person name="Ueda H.R."/>
            <person name="van Nimwegen E."/>
            <person name="Verardo R."/>
            <person name="Wei C.L."/>
            <person name="Yagi K."/>
            <person name="Yamanishi H."/>
            <person name="Zabarovsky E."/>
            <person name="Zhu S."/>
            <person name="Zimmer A."/>
            <person name="Hide W."/>
            <person name="Bult C."/>
            <person name="Grimmond S.M."/>
            <person name="Teasdale R.D."/>
            <person name="Liu E.T."/>
            <person name="Brusic V."/>
            <person name="Quackenbush J."/>
            <person name="Wahlestedt C."/>
            <person name="Mattick J.S."/>
            <person name="Hume D.A."/>
            <person name="Kai C."/>
            <person name="Sasaki D."/>
            <person name="Tomaru Y."/>
            <person name="Fukuda S."/>
            <person name="Kanamori-Katayama M."/>
            <person name="Suzuki M."/>
            <person name="Aoki J."/>
            <person name="Arakawa T."/>
            <person name="Iida J."/>
            <person name="Imamura K."/>
            <person name="Itoh M."/>
            <person name="Kato T."/>
            <person name="Kawaji H."/>
            <person name="Kawagashira N."/>
            <person name="Kawashima T."/>
            <person name="Kojima M."/>
            <person name="Kondo S."/>
            <person name="Konno H."/>
            <person name="Nakano K."/>
            <person name="Ninomiya N."/>
            <person name="Nishio T."/>
            <person name="Okada M."/>
            <person name="Plessy C."/>
            <person name="Shibata K."/>
            <person name="Shiraki T."/>
            <person name="Suzuki S."/>
            <person name="Tagami M."/>
            <person name="Waki K."/>
            <person name="Watahiki A."/>
            <person name="Okamura-Oho Y."/>
            <person name="Suzuki H."/>
            <person name="Kawai J."/>
            <person name="Hayashizaki Y."/>
        </authorList>
    </citation>
    <scope>NUCLEOTIDE SEQUENCE [LARGE SCALE MRNA]</scope>
    <source>
        <strain>C57BL/6J</strain>
        <tissue>Embryo</tissue>
    </source>
</reference>
<reference key="6">
    <citation type="journal article" date="2004" name="Genome Res.">
        <title>The status, quality, and expansion of the NIH full-length cDNA project: the Mammalian Gene Collection (MGC).</title>
        <authorList>
            <consortium name="The MGC Project Team"/>
        </authorList>
    </citation>
    <scope>NUCLEOTIDE SEQUENCE [LARGE SCALE MRNA]</scope>
    <source>
        <strain>C57BL/6J</strain>
        <tissue>Eye</tissue>
    </source>
</reference>
<reference key="7">
    <citation type="journal article" date="1999" name="J. Neurochem.">
        <title>Proteolysis of SNAP-25 isoforms by botulinum neurotoxin types A, C, and E: domains and amino acid residues controlling the formation of enzyme-substrate complexes and cleavage.</title>
        <authorList>
            <person name="Vaidyanathan V.V."/>
            <person name="Yoshino K."/>
            <person name="Jahnz M."/>
            <person name="Doerries C."/>
            <person name="Bade S."/>
            <person name="Nauenburg S."/>
            <person name="Niemann H."/>
            <person name="Binz T."/>
        </authorList>
    </citation>
    <scope>PROTEOLYTIC CLEAVAGE (MICROBIAL INFECTION) BY C.BOTULINUM NEUROTOXIN TYPES A AND E</scope>
</reference>
<reference key="8">
    <citation type="journal article" date="1998" name="J. Biol. Chem.">
        <title>Syntaxin 12, a member of the syntaxin family localized to the endosome.</title>
        <authorList>
            <person name="Tang B.L."/>
            <person name="Tan A.E."/>
            <person name="Lim L.K."/>
            <person name="Lee S.S."/>
            <person name="Low D.Y."/>
            <person name="Hong W."/>
        </authorList>
    </citation>
    <scope>INTERACTION WITH STX1A AND STX12</scope>
</reference>
<reference key="9">
    <citation type="journal article" date="2004" name="Dev. Cell">
        <title>A role of VAMP8/endobrevin in regulated exocytosis of pancreatic acinar cells.</title>
        <authorList>
            <person name="Wang C.-C."/>
            <person name="Ng C.P."/>
            <person name="Lu L."/>
            <person name="Atlashkin V."/>
            <person name="Zhang W."/>
            <person name="Seet L.-F."/>
            <person name="Hong W."/>
        </authorList>
    </citation>
    <scope>IDENTIFICATION IN A COMPLEX WITH VAMP8 AND STX4</scope>
</reference>
<reference key="10">
    <citation type="journal article" date="2007" name="Proc. Natl. Acad. Sci. U.S.A.">
        <title>Large-scale phosphorylation analysis of mouse liver.</title>
        <authorList>
            <person name="Villen J."/>
            <person name="Beausoleil S.A."/>
            <person name="Gerber S.A."/>
            <person name="Gygi S.P."/>
        </authorList>
    </citation>
    <scope>IDENTIFICATION BY MASS SPECTROMETRY [LARGE SCALE ANALYSIS]</scope>
    <source>
        <tissue>Liver</tissue>
    </source>
</reference>
<reference key="11">
    <citation type="journal article" date="2008" name="J. Proteome Res.">
        <title>Specific phosphopeptide enrichment with immobilized titanium ion affinity chromatography adsorbent for phosphoproteome analysis.</title>
        <authorList>
            <person name="Zhou H."/>
            <person name="Ye M."/>
            <person name="Dong J."/>
            <person name="Han G."/>
            <person name="Jiang X."/>
            <person name="Wu R."/>
            <person name="Zou H."/>
        </authorList>
    </citation>
    <scope>PHOSPHORYLATION [LARGE SCALE ANALYSIS] AT SER-110</scope>
    <scope>IDENTIFICATION BY MASS SPECTROMETRY [LARGE SCALE ANALYSIS]</scope>
    <source>
        <tissue>Liver</tissue>
    </source>
</reference>
<reference key="12">
    <citation type="journal article" date="2009" name="Immunity">
        <title>The phagosomal proteome in interferon-gamma-activated macrophages.</title>
        <authorList>
            <person name="Trost M."/>
            <person name="English L."/>
            <person name="Lemieux S."/>
            <person name="Courcelles M."/>
            <person name="Desjardins M."/>
            <person name="Thibault P."/>
        </authorList>
    </citation>
    <scope>PHOSPHORYLATION [LARGE SCALE ANALYSIS] AT SER-20; SER-23; SER-34 AND SER-110</scope>
    <scope>IDENTIFICATION BY MASS SPECTROMETRY [LARGE SCALE ANALYSIS]</scope>
</reference>
<reference key="13">
    <citation type="journal article" date="2010" name="Cell">
        <title>A tissue-specific atlas of mouse protein phosphorylation and expression.</title>
        <authorList>
            <person name="Huttlin E.L."/>
            <person name="Jedrychowski M.P."/>
            <person name="Elias J.E."/>
            <person name="Goswami T."/>
            <person name="Rad R."/>
            <person name="Beausoleil S.A."/>
            <person name="Villen J."/>
            <person name="Haas W."/>
            <person name="Sowa M.E."/>
            <person name="Gygi S.P."/>
        </authorList>
    </citation>
    <scope>PHOSPHORYLATION [LARGE SCALE ANALYSIS] AT SER-110 AND SER-160</scope>
    <scope>IDENTIFICATION BY MASS SPECTROMETRY [LARGE SCALE ANALYSIS]</scope>
    <source>
        <tissue>Brain</tissue>
        <tissue>Brown adipose tissue</tissue>
        <tissue>Heart</tissue>
        <tissue>Kidney</tissue>
        <tissue>Liver</tissue>
        <tissue>Lung</tissue>
        <tissue>Pancreas</tissue>
        <tissue>Spleen</tissue>
        <tissue>Testis</tissue>
    </source>
</reference>
<reference key="14">
    <citation type="journal article" date="2015" name="J. Biol. Chem.">
        <title>Identification of a novel sequence motif recognized by the ankyrin repeat domain of zDHHC17/13 S-acyltransferases.</title>
        <authorList>
            <person name="Lemonidis K."/>
            <person name="Sanchez-Perez M.C."/>
            <person name="Chamberlain L.H."/>
        </authorList>
    </citation>
    <scope>INTERACTION WITH ZDHHC17 AND ZDHHC13</scope>
    <scope>MUTAGENESIS OF PRO-119</scope>
</reference>
<gene>
    <name type="primary">Snap23</name>
    <name type="synonym">Sndt</name>
</gene>